<comment type="function">
    <text>Putative chemokine receptor.</text>
</comment>
<comment type="subcellular location">
    <subcellularLocation>
        <location>Host cell membrane</location>
        <topology>Multi-pass membrane protein</topology>
    </subcellularLocation>
</comment>
<comment type="similarity">
    <text evidence="2">Belongs to the G-protein coupled receptor 1 family.</text>
</comment>
<evidence type="ECO:0000255" key="1"/>
<evidence type="ECO:0000255" key="2">
    <source>
        <dbReference type="PROSITE-ProRule" id="PRU00521"/>
    </source>
</evidence>
<accession>Q86917</accession>
<organismHost>
    <name type="scientific">Ovis aries</name>
    <name type="common">Sheep</name>
    <dbReference type="NCBI Taxonomy" id="9940"/>
</organismHost>
<dbReference type="EMBL" id="S78201">
    <property type="protein sequence ID" value="AAC32894.1"/>
    <property type="molecule type" value="Genomic_DNA"/>
</dbReference>
<dbReference type="SMR" id="Q86917"/>
<dbReference type="GO" id="GO:0020002">
    <property type="term" value="C:host cell plasma membrane"/>
    <property type="evidence" value="ECO:0007669"/>
    <property type="project" value="UniProtKB-SubCell"/>
</dbReference>
<dbReference type="GO" id="GO:0016020">
    <property type="term" value="C:membrane"/>
    <property type="evidence" value="ECO:0007669"/>
    <property type="project" value="UniProtKB-KW"/>
</dbReference>
<dbReference type="GO" id="GO:0019957">
    <property type="term" value="F:C-C chemokine binding"/>
    <property type="evidence" value="ECO:0007669"/>
    <property type="project" value="TreeGrafter"/>
</dbReference>
<dbReference type="GO" id="GO:0016493">
    <property type="term" value="F:C-C chemokine receptor activity"/>
    <property type="evidence" value="ECO:0007669"/>
    <property type="project" value="TreeGrafter"/>
</dbReference>
<dbReference type="GO" id="GO:0019722">
    <property type="term" value="P:calcium-mediated signaling"/>
    <property type="evidence" value="ECO:0007669"/>
    <property type="project" value="TreeGrafter"/>
</dbReference>
<dbReference type="GO" id="GO:0060326">
    <property type="term" value="P:cell chemotaxis"/>
    <property type="evidence" value="ECO:0007669"/>
    <property type="project" value="TreeGrafter"/>
</dbReference>
<dbReference type="GO" id="GO:0006955">
    <property type="term" value="P:immune response"/>
    <property type="evidence" value="ECO:0007669"/>
    <property type="project" value="TreeGrafter"/>
</dbReference>
<dbReference type="GO" id="GO:0007204">
    <property type="term" value="P:positive regulation of cytosolic calcium ion concentration"/>
    <property type="evidence" value="ECO:0007669"/>
    <property type="project" value="TreeGrafter"/>
</dbReference>
<dbReference type="CDD" id="cd14984">
    <property type="entry name" value="7tmA_Chemokine_R"/>
    <property type="match status" value="1"/>
</dbReference>
<dbReference type="Gene3D" id="1.20.1070.10">
    <property type="entry name" value="Rhodopsin 7-helix transmembrane proteins"/>
    <property type="match status" value="1"/>
</dbReference>
<dbReference type="InterPro" id="IPR050119">
    <property type="entry name" value="CCR1-9-like"/>
</dbReference>
<dbReference type="InterPro" id="IPR000355">
    <property type="entry name" value="Chemokine_rcpt"/>
</dbReference>
<dbReference type="InterPro" id="IPR000276">
    <property type="entry name" value="GPCR_Rhodpsn"/>
</dbReference>
<dbReference type="InterPro" id="IPR017452">
    <property type="entry name" value="GPCR_Rhodpsn_7TM"/>
</dbReference>
<dbReference type="PANTHER" id="PTHR10489:SF627">
    <property type="entry name" value="C-C CHEMOKINE RECEPTOR TYPE 8"/>
    <property type="match status" value="1"/>
</dbReference>
<dbReference type="PANTHER" id="PTHR10489">
    <property type="entry name" value="CELL ADHESION MOLECULE"/>
    <property type="match status" value="1"/>
</dbReference>
<dbReference type="Pfam" id="PF00001">
    <property type="entry name" value="7tm_1"/>
    <property type="match status" value="1"/>
</dbReference>
<dbReference type="PRINTS" id="PR00657">
    <property type="entry name" value="CCCHEMOKINER"/>
</dbReference>
<dbReference type="PRINTS" id="PR00237">
    <property type="entry name" value="GPCRRHODOPSN"/>
</dbReference>
<dbReference type="SUPFAM" id="SSF81321">
    <property type="entry name" value="Family A G protein-coupled receptor-like"/>
    <property type="match status" value="1"/>
</dbReference>
<dbReference type="PROSITE" id="PS50262">
    <property type="entry name" value="G_PROTEIN_RECEP_F1_2"/>
    <property type="match status" value="1"/>
</dbReference>
<protein>
    <recommendedName>
        <fullName>G-protein coupled receptor homolog Q2/3L</fullName>
    </recommendedName>
</protein>
<name>VQ3L_SHEVK</name>
<feature type="chain" id="PRO_0000070255" description="G-protein coupled receptor homolog Q2/3L">
    <location>
        <begin position="1"/>
        <end position="381"/>
    </location>
</feature>
<feature type="topological domain" description="Extracellular" evidence="1">
    <location>
        <begin position="1"/>
        <end position="91"/>
    </location>
</feature>
<feature type="transmembrane region" description="Helical; Name=1" evidence="1">
    <location>
        <begin position="92"/>
        <end position="112"/>
    </location>
</feature>
<feature type="topological domain" description="Cytoplasmic" evidence="1">
    <location>
        <begin position="113"/>
        <end position="126"/>
    </location>
</feature>
<feature type="transmembrane region" description="Helical; Name=2" evidence="1">
    <location>
        <begin position="127"/>
        <end position="147"/>
    </location>
</feature>
<feature type="topological domain" description="Extracellular" evidence="1">
    <location>
        <begin position="148"/>
        <end position="165"/>
    </location>
</feature>
<feature type="transmembrane region" description="Helical; Name=3" evidence="1">
    <location>
        <begin position="166"/>
        <end position="186"/>
    </location>
</feature>
<feature type="topological domain" description="Cytoplasmic" evidence="1">
    <location>
        <begin position="187"/>
        <end position="206"/>
    </location>
</feature>
<feature type="transmembrane region" description="Helical; Name=4" evidence="1">
    <location>
        <begin position="207"/>
        <end position="227"/>
    </location>
</feature>
<feature type="topological domain" description="Extracellular" evidence="1">
    <location>
        <begin position="228"/>
        <end position="251"/>
    </location>
</feature>
<feature type="transmembrane region" description="Helical; Name=5" evidence="1">
    <location>
        <begin position="252"/>
        <end position="272"/>
    </location>
</feature>
<feature type="topological domain" description="Cytoplasmic" evidence="1">
    <location>
        <begin position="273"/>
        <end position="294"/>
    </location>
</feature>
<feature type="transmembrane region" description="Helical; Name=6" evidence="1">
    <location>
        <begin position="295"/>
        <end position="315"/>
    </location>
</feature>
<feature type="topological domain" description="Extracellular" evidence="1">
    <location>
        <begin position="316"/>
        <end position="336"/>
    </location>
</feature>
<feature type="transmembrane region" description="Helical; Name=7" evidence="1">
    <location>
        <begin position="337"/>
        <end position="357"/>
    </location>
</feature>
<feature type="topological domain" description="Cytoplasmic" evidence="1">
    <location>
        <begin position="358"/>
        <end position="381"/>
    </location>
</feature>
<feature type="glycosylation site" description="N-linked (GlcNAc...) asparagine; by host" evidence="1">
    <location>
        <position position="2"/>
    </location>
</feature>
<feature type="glycosylation site" description="N-linked (GlcNAc...) asparagine; by host" evidence="1">
    <location>
        <position position="15"/>
    </location>
</feature>
<feature type="glycosylation site" description="N-linked (GlcNAc...) asparagine; by host" evidence="1">
    <location>
        <position position="19"/>
    </location>
</feature>
<feature type="glycosylation site" description="N-linked (GlcNAc...) asparagine; by host" evidence="1">
    <location>
        <position position="41"/>
    </location>
</feature>
<feature type="glycosylation site" description="N-linked (GlcNAc...) asparagine; by host" evidence="1">
    <location>
        <position position="50"/>
    </location>
</feature>
<feature type="glycosylation site" description="N-linked (GlcNAc...) asparagine; by host" evidence="1">
    <location>
        <position position="56"/>
    </location>
</feature>
<feature type="glycosylation site" description="N-linked (GlcNAc...) asparagine; by host" evidence="1">
    <location>
        <position position="62"/>
    </location>
</feature>
<organism>
    <name type="scientific">Sheeppox virus (strain KS-1)</name>
    <name type="common">SPPV</name>
    <name type="synonym">Capripoxvirus (strain KS-1)</name>
    <dbReference type="NCBI Taxonomy" id="10269"/>
    <lineage>
        <taxon>Viruses</taxon>
        <taxon>Varidnaviria</taxon>
        <taxon>Bamfordvirae</taxon>
        <taxon>Nucleocytoviricota</taxon>
        <taxon>Pokkesviricetes</taxon>
        <taxon>Chitovirales</taxon>
        <taxon>Poxviridae</taxon>
        <taxon>Chordopoxvirinae</taxon>
        <taxon>Capripoxvirus</taxon>
        <taxon>Sheeppox virus</taxon>
    </lineage>
</organism>
<reference key="1">
    <citation type="journal article" date="1995" name="Virology">
        <title>Sequence analysis of HindIII Q2 fragment of capripoxvirus reveals a putative gene encoding a G-protein-coupled chemokine receptor homologue.</title>
        <authorList>
            <person name="Cao J.X."/>
            <person name="Gershon P.D."/>
            <person name="Black D.N."/>
        </authorList>
    </citation>
    <scope>NUCLEOTIDE SEQUENCE [GENOMIC DNA]</scope>
</reference>
<gene>
    <name type="ORF">Q2/3L</name>
</gene>
<sequence length="381" mass="43421">MNYTLSTVSSATMYNSSSNITTIATTIISTILSTISTNQNNVTTPSTYENTTTISNYTTAYNTTYYSDDYDDYEVSIVDIPHCDDGVDTTSFGLITLYSTIFFLGLFGNIIVLTVLRKYKIKTIQDMFLLNLTLSDLIFVLVFPFNLYDSIAKQWSLGDCLCKFKAMFYFVGFYNSMSFITLMSIDRYLAVVHPVKSMPIRTKRYGIVLSMVVWIVSTIESFPIMLFYETKKVYGITYCHVFYNDNAKIWKLFINFEINIFGMIIPLTILLYCYYKILNTLKTSQTKNKKAIKMVFLIVICSVLFLLPFSVTVFVSSLYLLNVFSGCMALRFVNLAVHVAEIVSLCHCFINPLIYAFCSREFTKKLLRLRTTSSAGSISIG</sequence>
<keyword id="KW-0297">G-protein coupled receptor</keyword>
<keyword id="KW-0325">Glycoprotein</keyword>
<keyword id="KW-1032">Host cell membrane</keyword>
<keyword id="KW-1043">Host membrane</keyword>
<keyword id="KW-0472">Membrane</keyword>
<keyword id="KW-0675">Receptor</keyword>
<keyword id="KW-0807">Transducer</keyword>
<keyword id="KW-0812">Transmembrane</keyword>
<keyword id="KW-1133">Transmembrane helix</keyword>
<proteinExistence type="inferred from homology"/>